<reference key="1">
    <citation type="journal article" date="2006" name="Lancet">
        <title>Complete genome sequence of USA300, an epidemic clone of community-acquired meticillin-resistant Staphylococcus aureus.</title>
        <authorList>
            <person name="Diep B.A."/>
            <person name="Gill S.R."/>
            <person name="Chang R.F."/>
            <person name="Phan T.H."/>
            <person name="Chen J.H."/>
            <person name="Davidson M.G."/>
            <person name="Lin F."/>
            <person name="Lin J."/>
            <person name="Carleton H.A."/>
            <person name="Mongodin E.F."/>
            <person name="Sensabaugh G.F."/>
            <person name="Perdreau-Remington F."/>
        </authorList>
    </citation>
    <scope>NUCLEOTIDE SEQUENCE [LARGE SCALE GENOMIC DNA]</scope>
    <source>
        <strain>USA300</strain>
    </source>
</reference>
<organism>
    <name type="scientific">Staphylococcus aureus (strain USA300)</name>
    <dbReference type="NCBI Taxonomy" id="367830"/>
    <lineage>
        <taxon>Bacteria</taxon>
        <taxon>Bacillati</taxon>
        <taxon>Bacillota</taxon>
        <taxon>Bacilli</taxon>
        <taxon>Bacillales</taxon>
        <taxon>Staphylococcaceae</taxon>
        <taxon>Staphylococcus</taxon>
    </lineage>
</organism>
<gene>
    <name evidence="1" type="primary">ruvA</name>
    <name type="ordered locus">SAUSA300_1598</name>
</gene>
<evidence type="ECO:0000255" key="1">
    <source>
        <dbReference type="HAMAP-Rule" id="MF_00031"/>
    </source>
</evidence>
<protein>
    <recommendedName>
        <fullName evidence="1">Holliday junction branch migration complex subunit RuvA</fullName>
    </recommendedName>
</protein>
<sequence>MYAYVKGKLTHLYPTHVVVETAGVGYEIQTPNSYRFQKHLDHEVLIHTSLIVREDAQLLYGFSSEEEKDMFLSLIKVTGIGPKSALAILATSTPNEVKRAIENENDTYLTKFPGIGKKTARQIVLDLKGKVKITEEDSDSLLQVDATSTVQDQFVQEAMLALEALGYSKRELAKVEKTLNKNKYDSVDEAVKAGLQLVVS</sequence>
<accession>Q2FG85</accession>
<feature type="chain" id="PRO_1000002563" description="Holliday junction branch migration complex subunit RuvA">
    <location>
        <begin position="1"/>
        <end position="200"/>
    </location>
</feature>
<feature type="region of interest" description="Domain I" evidence="1">
    <location>
        <begin position="1"/>
        <end position="63"/>
    </location>
</feature>
<feature type="region of interest" description="Domain II" evidence="1">
    <location>
        <begin position="64"/>
        <end position="142"/>
    </location>
</feature>
<feature type="region of interest" description="Flexible linker" evidence="1">
    <location>
        <begin position="143"/>
        <end position="149"/>
    </location>
</feature>
<feature type="region of interest" description="Domain III" evidence="1">
    <location>
        <begin position="150"/>
        <end position="200"/>
    </location>
</feature>
<name>RUVA_STAA3</name>
<dbReference type="EMBL" id="CP000255">
    <property type="protein sequence ID" value="ABD20634.1"/>
    <property type="molecule type" value="Genomic_DNA"/>
</dbReference>
<dbReference type="RefSeq" id="WP_000271547.1">
    <property type="nucleotide sequence ID" value="NZ_CP027476.1"/>
</dbReference>
<dbReference type="SMR" id="Q2FG85"/>
<dbReference type="KEGG" id="saa:SAUSA300_1598"/>
<dbReference type="HOGENOM" id="CLU_087936_1_0_9"/>
<dbReference type="OMA" id="ECAGVGY"/>
<dbReference type="Proteomes" id="UP000001939">
    <property type="component" value="Chromosome"/>
</dbReference>
<dbReference type="GO" id="GO:0005737">
    <property type="term" value="C:cytoplasm"/>
    <property type="evidence" value="ECO:0007669"/>
    <property type="project" value="UniProtKB-SubCell"/>
</dbReference>
<dbReference type="GO" id="GO:0009379">
    <property type="term" value="C:Holliday junction helicase complex"/>
    <property type="evidence" value="ECO:0007669"/>
    <property type="project" value="InterPro"/>
</dbReference>
<dbReference type="GO" id="GO:0048476">
    <property type="term" value="C:Holliday junction resolvase complex"/>
    <property type="evidence" value="ECO:0007669"/>
    <property type="project" value="UniProtKB-UniRule"/>
</dbReference>
<dbReference type="GO" id="GO:0005524">
    <property type="term" value="F:ATP binding"/>
    <property type="evidence" value="ECO:0007669"/>
    <property type="project" value="InterPro"/>
</dbReference>
<dbReference type="GO" id="GO:0000400">
    <property type="term" value="F:four-way junction DNA binding"/>
    <property type="evidence" value="ECO:0007669"/>
    <property type="project" value="UniProtKB-UniRule"/>
</dbReference>
<dbReference type="GO" id="GO:0009378">
    <property type="term" value="F:four-way junction helicase activity"/>
    <property type="evidence" value="ECO:0007669"/>
    <property type="project" value="InterPro"/>
</dbReference>
<dbReference type="GO" id="GO:0006310">
    <property type="term" value="P:DNA recombination"/>
    <property type="evidence" value="ECO:0007669"/>
    <property type="project" value="UniProtKB-UniRule"/>
</dbReference>
<dbReference type="GO" id="GO:0006281">
    <property type="term" value="P:DNA repair"/>
    <property type="evidence" value="ECO:0007669"/>
    <property type="project" value="UniProtKB-UniRule"/>
</dbReference>
<dbReference type="CDD" id="cd14332">
    <property type="entry name" value="UBA_RuvA_C"/>
    <property type="match status" value="1"/>
</dbReference>
<dbReference type="Gene3D" id="1.10.150.20">
    <property type="entry name" value="5' to 3' exonuclease, C-terminal subdomain"/>
    <property type="match status" value="1"/>
</dbReference>
<dbReference type="Gene3D" id="1.10.8.10">
    <property type="entry name" value="DNA helicase RuvA subunit, C-terminal domain"/>
    <property type="match status" value="1"/>
</dbReference>
<dbReference type="Gene3D" id="2.40.50.140">
    <property type="entry name" value="Nucleic acid-binding proteins"/>
    <property type="match status" value="1"/>
</dbReference>
<dbReference type="HAMAP" id="MF_00031">
    <property type="entry name" value="DNA_HJ_migration_RuvA"/>
    <property type="match status" value="1"/>
</dbReference>
<dbReference type="InterPro" id="IPR013849">
    <property type="entry name" value="DNA_helicase_Holl-junc_RuvA_I"/>
</dbReference>
<dbReference type="InterPro" id="IPR003583">
    <property type="entry name" value="Hlx-hairpin-Hlx_DNA-bd_motif"/>
</dbReference>
<dbReference type="InterPro" id="IPR012340">
    <property type="entry name" value="NA-bd_OB-fold"/>
</dbReference>
<dbReference type="InterPro" id="IPR000085">
    <property type="entry name" value="RuvA"/>
</dbReference>
<dbReference type="InterPro" id="IPR010994">
    <property type="entry name" value="RuvA_2-like"/>
</dbReference>
<dbReference type="InterPro" id="IPR011114">
    <property type="entry name" value="RuvA_C"/>
</dbReference>
<dbReference type="InterPro" id="IPR036267">
    <property type="entry name" value="RuvA_C_sf"/>
</dbReference>
<dbReference type="NCBIfam" id="TIGR00084">
    <property type="entry name" value="ruvA"/>
    <property type="match status" value="1"/>
</dbReference>
<dbReference type="Pfam" id="PF14520">
    <property type="entry name" value="HHH_5"/>
    <property type="match status" value="1"/>
</dbReference>
<dbReference type="Pfam" id="PF07499">
    <property type="entry name" value="RuvA_C"/>
    <property type="match status" value="1"/>
</dbReference>
<dbReference type="Pfam" id="PF01330">
    <property type="entry name" value="RuvA_N"/>
    <property type="match status" value="1"/>
</dbReference>
<dbReference type="SMART" id="SM00278">
    <property type="entry name" value="HhH1"/>
    <property type="match status" value="2"/>
</dbReference>
<dbReference type="SUPFAM" id="SSF46929">
    <property type="entry name" value="DNA helicase RuvA subunit, C-terminal domain"/>
    <property type="match status" value="1"/>
</dbReference>
<dbReference type="SUPFAM" id="SSF50249">
    <property type="entry name" value="Nucleic acid-binding proteins"/>
    <property type="match status" value="1"/>
</dbReference>
<dbReference type="SUPFAM" id="SSF47781">
    <property type="entry name" value="RuvA domain 2-like"/>
    <property type="match status" value="1"/>
</dbReference>
<keyword id="KW-0963">Cytoplasm</keyword>
<keyword id="KW-0227">DNA damage</keyword>
<keyword id="KW-0233">DNA recombination</keyword>
<keyword id="KW-0234">DNA repair</keyword>
<keyword id="KW-0238">DNA-binding</keyword>
<proteinExistence type="inferred from homology"/>
<comment type="function">
    <text evidence="1">The RuvA-RuvB-RuvC complex processes Holliday junction (HJ) DNA during genetic recombination and DNA repair, while the RuvA-RuvB complex plays an important role in the rescue of blocked DNA replication forks via replication fork reversal (RFR). RuvA specifically binds to HJ cruciform DNA, conferring on it an open structure. The RuvB hexamer acts as an ATP-dependent pump, pulling dsDNA into and through the RuvAB complex. HJ branch migration allows RuvC to scan DNA until it finds its consensus sequence, where it cleaves and resolves the cruciform DNA.</text>
</comment>
<comment type="subunit">
    <text evidence="1">Homotetramer. Forms an RuvA(8)-RuvB(12)-Holliday junction (HJ) complex. HJ DNA is sandwiched between 2 RuvA tetramers; dsDNA enters through RuvA and exits via RuvB. An RuvB hexamer assembles on each DNA strand where it exits the tetramer. Each RuvB hexamer is contacted by two RuvA subunits (via domain III) on 2 adjacent RuvB subunits; this complex drives branch migration. In the full resolvosome a probable DNA-RuvA(4)-RuvB(12)-RuvC(2) complex forms which resolves the HJ.</text>
</comment>
<comment type="subcellular location">
    <subcellularLocation>
        <location evidence="1">Cytoplasm</location>
    </subcellularLocation>
</comment>
<comment type="domain">
    <text evidence="1">Has three domains with a flexible linker between the domains II and III and assumes an 'L' shape. Domain III is highly mobile and contacts RuvB.</text>
</comment>
<comment type="similarity">
    <text evidence="1">Belongs to the RuvA family.</text>
</comment>